<gene>
    <name type="primary">USP17L22</name>
</gene>
<keyword id="KW-0256">Endoplasmic reticulum</keyword>
<keyword id="KW-0378">Hydrolase</keyword>
<keyword id="KW-0539">Nucleus</keyword>
<keyword id="KW-0645">Protease</keyword>
<keyword id="KW-1185">Reference proteome</keyword>
<keyword id="KW-0788">Thiol protease</keyword>
<keyword id="KW-0833">Ubl conjugation pathway</keyword>
<accession>D6RA61</accession>
<comment type="function">
    <text evidence="1">Deubiquitinating enzyme that removes conjugated ubiquitin from specific proteins to regulate different cellular processes that may include cell proliferation, progression through the cell cycle, apoptosis, cell migration, and the cellular response to viral infection.</text>
</comment>
<comment type="catalytic activity">
    <reaction>
        <text>Thiol-dependent hydrolysis of ester, thioester, amide, peptide and isopeptide bonds formed by the C-terminal Gly of ubiquitin (a 76-residue protein attached to proteins as an intracellular targeting signal).</text>
        <dbReference type="EC" id="3.4.19.12"/>
    </reaction>
</comment>
<comment type="subcellular location">
    <subcellularLocation>
        <location evidence="1">Nucleus</location>
    </subcellularLocation>
    <subcellularLocation>
        <location evidence="1">Endoplasmic reticulum</location>
    </subcellularLocation>
</comment>
<comment type="similarity">
    <text evidence="5">Belongs to the peptidase C19 family. USP17 subfamily.</text>
</comment>
<comment type="caution">
    <text evidence="5">The RS447 megasatellite DNA is a highly polymorphic conserved tandem repetitive sequence which contains a copy of the USP17 gene. It is present with an interindividual variation in copy number, ranging from 20 to 103, and can be found in the genome on chromosome 4 and chromosome 8. The high similarity between the UPS17-like genes makes it impossible to specifically assign data to a particular gene of the family. Oligonucleotides designed in RNAi experiments are for instance not specific for a given UPS17-like gene.</text>
</comment>
<evidence type="ECO:0000250" key="1"/>
<evidence type="ECO:0000255" key="2">
    <source>
        <dbReference type="PROSITE-ProRule" id="PRU10092"/>
    </source>
</evidence>
<evidence type="ECO:0000255" key="3">
    <source>
        <dbReference type="PROSITE-ProRule" id="PRU10093"/>
    </source>
</evidence>
<evidence type="ECO:0000256" key="4">
    <source>
        <dbReference type="SAM" id="MobiDB-lite"/>
    </source>
</evidence>
<evidence type="ECO:0000305" key="5"/>
<name>U17LM_HUMAN</name>
<feature type="chain" id="PRO_0000421096" description="Ubiquitin carboxyl-terminal hydrolase 17-like protein 22">
    <location>
        <begin position="1"/>
        <end position="530"/>
    </location>
</feature>
<feature type="domain" description="USP">
    <location>
        <begin position="80"/>
        <end position="375"/>
    </location>
</feature>
<feature type="region of interest" description="Disordered" evidence="4">
    <location>
        <begin position="382"/>
        <end position="412"/>
    </location>
</feature>
<feature type="region of interest" description="Disordered" evidence="4">
    <location>
        <begin position="476"/>
        <end position="530"/>
    </location>
</feature>
<feature type="compositionally biased region" description="Basic and acidic residues" evidence="4">
    <location>
        <begin position="382"/>
        <end position="392"/>
    </location>
</feature>
<feature type="compositionally biased region" description="Basic and acidic residues" evidence="4">
    <location>
        <begin position="398"/>
        <end position="412"/>
    </location>
</feature>
<feature type="compositionally biased region" description="Low complexity" evidence="4">
    <location>
        <begin position="484"/>
        <end position="495"/>
    </location>
</feature>
<feature type="compositionally biased region" description="Polar residues" evidence="4">
    <location>
        <begin position="496"/>
        <end position="505"/>
    </location>
</feature>
<feature type="compositionally biased region" description="Basic residues" evidence="4">
    <location>
        <begin position="510"/>
        <end position="524"/>
    </location>
</feature>
<feature type="active site" description="Nucleophile" evidence="2 3">
    <location>
        <position position="89"/>
    </location>
</feature>
<feature type="active site" description="Proton acceptor" evidence="2 3">
    <location>
        <position position="334"/>
    </location>
</feature>
<organism>
    <name type="scientific">Homo sapiens</name>
    <name type="common">Human</name>
    <dbReference type="NCBI Taxonomy" id="9606"/>
    <lineage>
        <taxon>Eukaryota</taxon>
        <taxon>Metazoa</taxon>
        <taxon>Chordata</taxon>
        <taxon>Craniata</taxon>
        <taxon>Vertebrata</taxon>
        <taxon>Euteleostomi</taxon>
        <taxon>Mammalia</taxon>
        <taxon>Eutheria</taxon>
        <taxon>Euarchontoglires</taxon>
        <taxon>Primates</taxon>
        <taxon>Haplorrhini</taxon>
        <taxon>Catarrhini</taxon>
        <taxon>Hominidae</taxon>
        <taxon>Homo</taxon>
    </lineage>
</organism>
<proteinExistence type="inferred from homology"/>
<dbReference type="EC" id="3.4.19.12"/>
<dbReference type="EMBL" id="AC108519">
    <property type="status" value="NOT_ANNOTATED_CDS"/>
    <property type="molecule type" value="Genomic_DNA"/>
</dbReference>
<dbReference type="CCDS" id="CCDS59463.1"/>
<dbReference type="RefSeq" id="NP_001243792.1">
    <property type="nucleotide sequence ID" value="NM_001256863.1"/>
</dbReference>
<dbReference type="SMR" id="D6RA61"/>
<dbReference type="BioGRID" id="939174">
    <property type="interactions" value="3"/>
</dbReference>
<dbReference type="FunCoup" id="D6RA61">
    <property type="interactions" value="448"/>
</dbReference>
<dbReference type="IntAct" id="D6RA61">
    <property type="interactions" value="1"/>
</dbReference>
<dbReference type="STRING" id="9606.ENSP00000423115"/>
<dbReference type="MEROPS" id="C19.A82"/>
<dbReference type="MEROPS" id="C19.A97"/>
<dbReference type="BioMuta" id="USP17L22"/>
<dbReference type="jPOST" id="D6RA61"/>
<dbReference type="MassIVE" id="D6RA61"/>
<dbReference type="PaxDb" id="9606-ENSP00000423115"/>
<dbReference type="Antibodypedia" id="77510">
    <property type="antibodies" value="3 antibodies from 1 providers"/>
</dbReference>
<dbReference type="DNASU" id="100287513"/>
<dbReference type="Ensembl" id="ENST00000511280.1">
    <property type="protein sequence ID" value="ENSP00000423115.1"/>
    <property type="gene ID" value="ENSG00000248933.3"/>
</dbReference>
<dbReference type="GeneID" id="100287513"/>
<dbReference type="KEGG" id="hsa:100287513"/>
<dbReference type="MANE-Select" id="ENST00000511280.1">
    <property type="protein sequence ID" value="ENSP00000423115.1"/>
    <property type="RefSeq nucleotide sequence ID" value="NM_001256863.1"/>
    <property type="RefSeq protein sequence ID" value="NP_001243792.1"/>
</dbReference>
<dbReference type="UCSC" id="uc031sdp.1">
    <property type="organism name" value="human"/>
</dbReference>
<dbReference type="AGR" id="HGNC:44450"/>
<dbReference type="CTD" id="100287513"/>
<dbReference type="GeneCards" id="USP17L22"/>
<dbReference type="HGNC" id="HGNC:44450">
    <property type="gene designation" value="USP17L22"/>
</dbReference>
<dbReference type="HPA" id="ENSG00000248933">
    <property type="expression patterns" value="Not detected"/>
</dbReference>
<dbReference type="neXtProt" id="NX_D6RA61"/>
<dbReference type="VEuPathDB" id="HostDB:ENSG00000248933"/>
<dbReference type="eggNOG" id="KOG1865">
    <property type="taxonomic scope" value="Eukaryota"/>
</dbReference>
<dbReference type="GeneTree" id="ENSGT00940000161948"/>
<dbReference type="InParanoid" id="D6RA61"/>
<dbReference type="OMA" id="CQEEFQF"/>
<dbReference type="OrthoDB" id="8832at9604"/>
<dbReference type="PAN-GO" id="D6RA61">
    <property type="GO annotations" value="6 GO annotations based on evolutionary models"/>
</dbReference>
<dbReference type="PhylomeDB" id="D6RA61"/>
<dbReference type="TreeFam" id="TF315281"/>
<dbReference type="PathwayCommons" id="D6RA61"/>
<dbReference type="Reactome" id="R-HSA-5689880">
    <property type="pathway name" value="Ub-specific processing proteases"/>
</dbReference>
<dbReference type="SignaLink" id="D6RA61"/>
<dbReference type="BioGRID-ORCS" id="100287513">
    <property type="hits" value="17 hits in 153 CRISPR screens"/>
</dbReference>
<dbReference type="GenomeRNAi" id="100287513"/>
<dbReference type="Pharos" id="D6RA61">
    <property type="development level" value="Tdark"/>
</dbReference>
<dbReference type="PRO" id="PR:D6RA61"/>
<dbReference type="Proteomes" id="UP000005640">
    <property type="component" value="Chromosome 4"/>
</dbReference>
<dbReference type="RNAct" id="D6RA61">
    <property type="molecule type" value="protein"/>
</dbReference>
<dbReference type="Bgee" id="ENSG00000248933">
    <property type="expression patterns" value="Expressed in kidney and 3 other cell types or tissues"/>
</dbReference>
<dbReference type="GO" id="GO:0005829">
    <property type="term" value="C:cytosol"/>
    <property type="evidence" value="ECO:0000318"/>
    <property type="project" value="GO_Central"/>
</dbReference>
<dbReference type="GO" id="GO:0005783">
    <property type="term" value="C:endoplasmic reticulum"/>
    <property type="evidence" value="ECO:0007669"/>
    <property type="project" value="UniProtKB-SubCell"/>
</dbReference>
<dbReference type="GO" id="GO:0005634">
    <property type="term" value="C:nucleus"/>
    <property type="evidence" value="ECO:0000318"/>
    <property type="project" value="GO_Central"/>
</dbReference>
<dbReference type="GO" id="GO:0004843">
    <property type="term" value="F:cysteine-type deubiquitinase activity"/>
    <property type="evidence" value="ECO:0000318"/>
    <property type="project" value="GO_Central"/>
</dbReference>
<dbReference type="GO" id="GO:0016579">
    <property type="term" value="P:protein deubiquitination"/>
    <property type="evidence" value="ECO:0007669"/>
    <property type="project" value="InterPro"/>
</dbReference>
<dbReference type="GO" id="GO:0006508">
    <property type="term" value="P:proteolysis"/>
    <property type="evidence" value="ECO:0007669"/>
    <property type="project" value="UniProtKB-KW"/>
</dbReference>
<dbReference type="GO" id="GO:0042981">
    <property type="term" value="P:regulation of apoptotic process"/>
    <property type="evidence" value="ECO:0000318"/>
    <property type="project" value="GO_Central"/>
</dbReference>
<dbReference type="GO" id="GO:0031647">
    <property type="term" value="P:regulation of protein stability"/>
    <property type="evidence" value="ECO:0000318"/>
    <property type="project" value="GO_Central"/>
</dbReference>
<dbReference type="CDD" id="cd02661">
    <property type="entry name" value="Peptidase_C19E"/>
    <property type="match status" value="1"/>
</dbReference>
<dbReference type="FunFam" id="3.90.70.10:FF:000070">
    <property type="entry name" value="Ubiquitin carboxyl-terminal hydrolase 17-like protein 17"/>
    <property type="match status" value="1"/>
</dbReference>
<dbReference type="Gene3D" id="3.90.70.10">
    <property type="entry name" value="Cysteine proteinases"/>
    <property type="match status" value="1"/>
</dbReference>
<dbReference type="InterPro" id="IPR006861">
    <property type="entry name" value="HABP4_PAIRBP1-bd"/>
</dbReference>
<dbReference type="InterPro" id="IPR038765">
    <property type="entry name" value="Papain-like_cys_pep_sf"/>
</dbReference>
<dbReference type="InterPro" id="IPR050164">
    <property type="entry name" value="Peptidase_C19"/>
</dbReference>
<dbReference type="InterPro" id="IPR001394">
    <property type="entry name" value="Peptidase_C19_UCH"/>
</dbReference>
<dbReference type="InterPro" id="IPR018200">
    <property type="entry name" value="USP_CS"/>
</dbReference>
<dbReference type="InterPro" id="IPR028889">
    <property type="entry name" value="USP_dom"/>
</dbReference>
<dbReference type="PANTHER" id="PTHR24006:SF651">
    <property type="entry name" value="INACTIVE UBIQUITIN CARBOXYL-TERMINAL HYDROLASE 17-LIKE PROTEIN 4-RELATED"/>
    <property type="match status" value="1"/>
</dbReference>
<dbReference type="PANTHER" id="PTHR24006">
    <property type="entry name" value="UBIQUITIN CARBOXYL-TERMINAL HYDROLASE"/>
    <property type="match status" value="1"/>
</dbReference>
<dbReference type="Pfam" id="PF04774">
    <property type="entry name" value="HABP4_PAI-RBP1"/>
    <property type="match status" value="1"/>
</dbReference>
<dbReference type="Pfam" id="PF00443">
    <property type="entry name" value="UCH"/>
    <property type="match status" value="1"/>
</dbReference>
<dbReference type="SUPFAM" id="SSF54001">
    <property type="entry name" value="Cysteine proteinases"/>
    <property type="match status" value="1"/>
</dbReference>
<dbReference type="PROSITE" id="PS00972">
    <property type="entry name" value="USP_1"/>
    <property type="match status" value="1"/>
</dbReference>
<dbReference type="PROSITE" id="PS00973">
    <property type="entry name" value="USP_2"/>
    <property type="match status" value="1"/>
</dbReference>
<dbReference type="PROSITE" id="PS50235">
    <property type="entry name" value="USP_3"/>
    <property type="match status" value="1"/>
</dbReference>
<sequence>MEDDSLYLGGEWQFNHFSKLTSSRPDAAFAEIQRTSLPEKSPLSCETRVDLCDDLAPVARQLAPREKLPLSSRRPAAVGAGLQNMGNTCYVNASLQCLTYTPPLANYMLSREHSQTCHRHKGCMLCTMQAHITRALHNPGHVIQPSQALAAGFHRGKQEDAHEFLMFTVDAMKKACLPGHKQVDHHSKDTTLIHQIFGGYWRSQIKCLHCHGISDTFDPYLDIALDIQAAQSVQQALEQLVKPEELNGENAYHCGVCLQRAPASKTLTLHTSAKVLILVLKRFSDVTGNKIAKNVQYPECLDMQPYMSQQNTGPLVYVLYAVLVHAGWSCHNGHYFSYVKAQEGQWYKMDDAEVTASSITSVLSQQAYVLFYIQKSEWERHSESVSRGREPRALGAEDTDRRATQGELKRDHPCLQAPELDEHLVERATQESTLDHWKFLQEQNKTKPEFNVRKVEGTLPPDVLVIHQSKYKCGMKNHHPEQQSSLLKLSSTTPTHQESMNTGTLASLRGRARRSKGKNKHSKRALLVCQ</sequence>
<protein>
    <recommendedName>
        <fullName>Ubiquitin carboxyl-terminal hydrolase 17-like protein 22</fullName>
        <ecNumber>3.4.19.12</ecNumber>
    </recommendedName>
</protein>
<reference key="1">
    <citation type="journal article" date="2005" name="Nature">
        <title>Generation and annotation of the DNA sequences of human chromosomes 2 and 4.</title>
        <authorList>
            <person name="Hillier L.W."/>
            <person name="Graves T.A."/>
            <person name="Fulton R.S."/>
            <person name="Fulton L.A."/>
            <person name="Pepin K.H."/>
            <person name="Minx P."/>
            <person name="Wagner-McPherson C."/>
            <person name="Layman D."/>
            <person name="Wylie K."/>
            <person name="Sekhon M."/>
            <person name="Becker M.C."/>
            <person name="Fewell G.A."/>
            <person name="Delehaunty K.D."/>
            <person name="Miner T.L."/>
            <person name="Nash W.E."/>
            <person name="Kremitzki C."/>
            <person name="Oddy L."/>
            <person name="Du H."/>
            <person name="Sun H."/>
            <person name="Bradshaw-Cordum H."/>
            <person name="Ali J."/>
            <person name="Carter J."/>
            <person name="Cordes M."/>
            <person name="Harris A."/>
            <person name="Isak A."/>
            <person name="van Brunt A."/>
            <person name="Nguyen C."/>
            <person name="Du F."/>
            <person name="Courtney L."/>
            <person name="Kalicki J."/>
            <person name="Ozersky P."/>
            <person name="Abbott S."/>
            <person name="Armstrong J."/>
            <person name="Belter E.A."/>
            <person name="Caruso L."/>
            <person name="Cedroni M."/>
            <person name="Cotton M."/>
            <person name="Davidson T."/>
            <person name="Desai A."/>
            <person name="Elliott G."/>
            <person name="Erb T."/>
            <person name="Fronick C."/>
            <person name="Gaige T."/>
            <person name="Haakenson W."/>
            <person name="Haglund K."/>
            <person name="Holmes A."/>
            <person name="Harkins R."/>
            <person name="Kim K."/>
            <person name="Kruchowski S.S."/>
            <person name="Strong C.M."/>
            <person name="Grewal N."/>
            <person name="Goyea E."/>
            <person name="Hou S."/>
            <person name="Levy A."/>
            <person name="Martinka S."/>
            <person name="Mead K."/>
            <person name="McLellan M.D."/>
            <person name="Meyer R."/>
            <person name="Randall-Maher J."/>
            <person name="Tomlinson C."/>
            <person name="Dauphin-Kohlberg S."/>
            <person name="Kozlowicz-Reilly A."/>
            <person name="Shah N."/>
            <person name="Swearengen-Shahid S."/>
            <person name="Snider J."/>
            <person name="Strong J.T."/>
            <person name="Thompson J."/>
            <person name="Yoakum M."/>
            <person name="Leonard S."/>
            <person name="Pearman C."/>
            <person name="Trani L."/>
            <person name="Radionenko M."/>
            <person name="Waligorski J.E."/>
            <person name="Wang C."/>
            <person name="Rock S.M."/>
            <person name="Tin-Wollam A.-M."/>
            <person name="Maupin R."/>
            <person name="Latreille P."/>
            <person name="Wendl M.C."/>
            <person name="Yang S.-P."/>
            <person name="Pohl C."/>
            <person name="Wallis J.W."/>
            <person name="Spieth J."/>
            <person name="Bieri T.A."/>
            <person name="Berkowicz N."/>
            <person name="Nelson J.O."/>
            <person name="Osborne J."/>
            <person name="Ding L."/>
            <person name="Meyer R."/>
            <person name="Sabo A."/>
            <person name="Shotland Y."/>
            <person name="Sinha P."/>
            <person name="Wohldmann P.E."/>
            <person name="Cook L.L."/>
            <person name="Hickenbotham M.T."/>
            <person name="Eldred J."/>
            <person name="Williams D."/>
            <person name="Jones T.A."/>
            <person name="She X."/>
            <person name="Ciccarelli F.D."/>
            <person name="Izaurralde E."/>
            <person name="Taylor J."/>
            <person name="Schmutz J."/>
            <person name="Myers R.M."/>
            <person name="Cox D.R."/>
            <person name="Huang X."/>
            <person name="McPherson J.D."/>
            <person name="Mardis E.R."/>
            <person name="Clifton S.W."/>
            <person name="Warren W.C."/>
            <person name="Chinwalla A.T."/>
            <person name="Eddy S.R."/>
            <person name="Marra M.A."/>
            <person name="Ovcharenko I."/>
            <person name="Furey T.S."/>
            <person name="Miller W."/>
            <person name="Eichler E.E."/>
            <person name="Bork P."/>
            <person name="Suyama M."/>
            <person name="Torrents D."/>
            <person name="Waterston R.H."/>
            <person name="Wilson R.K."/>
        </authorList>
    </citation>
    <scope>NUCLEOTIDE SEQUENCE [LARGE SCALE GENOMIC DNA]</scope>
</reference>